<organism>
    <name type="scientific">Parafrankia sp. (strain EAN1pec)</name>
    <dbReference type="NCBI Taxonomy" id="298653"/>
    <lineage>
        <taxon>Bacteria</taxon>
        <taxon>Bacillati</taxon>
        <taxon>Actinomycetota</taxon>
        <taxon>Actinomycetes</taxon>
        <taxon>Frankiales</taxon>
        <taxon>Frankiaceae</taxon>
        <taxon>Parafrankia</taxon>
    </lineage>
</organism>
<sequence>MITPQQPSGMPIEKYRPFPAVALPDRTWPNATITEAPRWCSVDLRDGNQALIDPMTPSRKMQLFELLVAMGYKEIEVGFPAASQTDFDFVRQLIEDDLIPDDVTIQVLTQAREELIERTVTSLVGSDRALIHLYNSTSTLQRRVVFGLDRAGVTDIAVQGARWCAQYAEKLLEGTDVRWQYSPESFTGTELDYALEVCEAVMDVWAPTPDNPVVLNLPATVEMSTPNVYADQIEWMSRNLTRRDAVVLSLHPHNDRGCAVAAAELGVMAGADRVEGCLFGNGERTGNVCLVTLGMNLFSQGIDPMIDLSDIDGVRRTVEYCNQLPVHPRHPYGGDLVYTAFSGSHQDAIKKGFEAMERTGQTLWEVPYLPIDPKDVGRSYEAVIRVNSQSGKGGVAYLMKSEYALDLPRRLQIEFSGVVQKHTDDAGGEVTAGQLWEIFTREYRPEGGDPAASLELLGSRTTAASGARDEVTVSVRLDGTETVITGSGNGPIDAFVAALSERGVPVRVLDYNEHALGSGADARAAAYLEVAVGETVLWGVGIDPNIVTASLRAVVSAVNRASRES</sequence>
<reference key="1">
    <citation type="journal article" date="2007" name="Genome Res.">
        <title>Genome characteristics of facultatively symbiotic Frankia sp. strains reflect host range and host plant biogeography.</title>
        <authorList>
            <person name="Normand P."/>
            <person name="Lapierre P."/>
            <person name="Tisa L.S."/>
            <person name="Gogarten J.P."/>
            <person name="Alloisio N."/>
            <person name="Bagnarol E."/>
            <person name="Bassi C.A."/>
            <person name="Berry A.M."/>
            <person name="Bickhart D.M."/>
            <person name="Choisne N."/>
            <person name="Couloux A."/>
            <person name="Cournoyer B."/>
            <person name="Cruveiller S."/>
            <person name="Daubin V."/>
            <person name="Demange N."/>
            <person name="Francino M.P."/>
            <person name="Goltsman E."/>
            <person name="Huang Y."/>
            <person name="Kopp O.R."/>
            <person name="Labarre L."/>
            <person name="Lapidus A."/>
            <person name="Lavire C."/>
            <person name="Marechal J."/>
            <person name="Martinez M."/>
            <person name="Mastronunzio J.E."/>
            <person name="Mullin B.C."/>
            <person name="Niemann J."/>
            <person name="Pujic P."/>
            <person name="Rawnsley T."/>
            <person name="Rouy Z."/>
            <person name="Schenowitz C."/>
            <person name="Sellstedt A."/>
            <person name="Tavares F."/>
            <person name="Tomkins J.P."/>
            <person name="Vallenet D."/>
            <person name="Valverde C."/>
            <person name="Wall L.G."/>
            <person name="Wang Y."/>
            <person name="Medigue C."/>
            <person name="Benson D.R."/>
        </authorList>
    </citation>
    <scope>NUCLEOTIDE SEQUENCE [LARGE SCALE GENOMIC DNA]</scope>
    <source>
        <strain>EAN1pec</strain>
    </source>
</reference>
<comment type="function">
    <text evidence="1">Catalyzes the condensation of the acetyl group of acetyl-CoA with 3-methyl-2-oxobutanoate (2-ketoisovalerate) to form 3-carboxy-3-hydroxy-4-methylpentanoate (2-isopropylmalate).</text>
</comment>
<comment type="catalytic activity">
    <reaction evidence="1">
        <text>3-methyl-2-oxobutanoate + acetyl-CoA + H2O = (2S)-2-isopropylmalate + CoA + H(+)</text>
        <dbReference type="Rhea" id="RHEA:21524"/>
        <dbReference type="ChEBI" id="CHEBI:1178"/>
        <dbReference type="ChEBI" id="CHEBI:11851"/>
        <dbReference type="ChEBI" id="CHEBI:15377"/>
        <dbReference type="ChEBI" id="CHEBI:15378"/>
        <dbReference type="ChEBI" id="CHEBI:57287"/>
        <dbReference type="ChEBI" id="CHEBI:57288"/>
        <dbReference type="EC" id="2.3.3.13"/>
    </reaction>
</comment>
<comment type="cofactor">
    <cofactor evidence="1">
        <name>Mg(2+)</name>
        <dbReference type="ChEBI" id="CHEBI:18420"/>
    </cofactor>
</comment>
<comment type="pathway">
    <text evidence="1">Amino-acid biosynthesis; L-leucine biosynthesis; L-leucine from 3-methyl-2-oxobutanoate: step 1/4.</text>
</comment>
<comment type="subunit">
    <text evidence="1">Homodimer.</text>
</comment>
<comment type="subcellular location">
    <subcellularLocation>
        <location evidence="1">Cytoplasm</location>
    </subcellularLocation>
</comment>
<comment type="similarity">
    <text evidence="1">Belongs to the alpha-IPM synthase/homocitrate synthase family. LeuA type 2 subfamily.</text>
</comment>
<dbReference type="EC" id="2.3.3.13" evidence="1"/>
<dbReference type="EMBL" id="CP000820">
    <property type="protein sequence ID" value="ABW10551.1"/>
    <property type="molecule type" value="Genomic_DNA"/>
</dbReference>
<dbReference type="SMR" id="A8L551"/>
<dbReference type="STRING" id="298653.Franean1_1095"/>
<dbReference type="KEGG" id="fre:Franean1_1095"/>
<dbReference type="eggNOG" id="COG0119">
    <property type="taxonomic scope" value="Bacteria"/>
</dbReference>
<dbReference type="HOGENOM" id="CLU_004588_3_0_11"/>
<dbReference type="UniPathway" id="UPA00048">
    <property type="reaction ID" value="UER00070"/>
</dbReference>
<dbReference type="GO" id="GO:0005737">
    <property type="term" value="C:cytoplasm"/>
    <property type="evidence" value="ECO:0007669"/>
    <property type="project" value="UniProtKB-SubCell"/>
</dbReference>
<dbReference type="GO" id="GO:0003852">
    <property type="term" value="F:2-isopropylmalate synthase activity"/>
    <property type="evidence" value="ECO:0007669"/>
    <property type="project" value="UniProtKB-UniRule"/>
</dbReference>
<dbReference type="GO" id="GO:0003985">
    <property type="term" value="F:acetyl-CoA C-acetyltransferase activity"/>
    <property type="evidence" value="ECO:0007669"/>
    <property type="project" value="UniProtKB-UniRule"/>
</dbReference>
<dbReference type="GO" id="GO:0000287">
    <property type="term" value="F:magnesium ion binding"/>
    <property type="evidence" value="ECO:0007669"/>
    <property type="project" value="UniProtKB-UniRule"/>
</dbReference>
<dbReference type="GO" id="GO:0009098">
    <property type="term" value="P:L-leucine biosynthetic process"/>
    <property type="evidence" value="ECO:0007669"/>
    <property type="project" value="UniProtKB-UniRule"/>
</dbReference>
<dbReference type="CDD" id="cd07942">
    <property type="entry name" value="DRE_TIM_LeuA"/>
    <property type="match status" value="1"/>
</dbReference>
<dbReference type="FunFam" id="3.20.20.70:FF:000045">
    <property type="entry name" value="2-isopropylmalate synthase"/>
    <property type="match status" value="1"/>
</dbReference>
<dbReference type="FunFam" id="3.30.160.270:FF:000006">
    <property type="entry name" value="2-isopropylmalate synthase"/>
    <property type="match status" value="1"/>
</dbReference>
<dbReference type="Gene3D" id="3.30.160.270">
    <property type="match status" value="1"/>
</dbReference>
<dbReference type="Gene3D" id="3.20.20.70">
    <property type="entry name" value="Aldolase class I"/>
    <property type="match status" value="1"/>
</dbReference>
<dbReference type="HAMAP" id="MF_00572">
    <property type="entry name" value="LeuA_type2"/>
    <property type="match status" value="1"/>
</dbReference>
<dbReference type="InterPro" id="IPR013709">
    <property type="entry name" value="2-isopropylmalate_synth_dimer"/>
</dbReference>
<dbReference type="InterPro" id="IPR002034">
    <property type="entry name" value="AIPM/Hcit_synth_CS"/>
</dbReference>
<dbReference type="InterPro" id="IPR013785">
    <property type="entry name" value="Aldolase_TIM"/>
</dbReference>
<dbReference type="InterPro" id="IPR005668">
    <property type="entry name" value="IPM_Synthase"/>
</dbReference>
<dbReference type="InterPro" id="IPR054692">
    <property type="entry name" value="LeuA-like_post-cat"/>
</dbReference>
<dbReference type="InterPro" id="IPR036230">
    <property type="entry name" value="LeuA_allosteric_dom_sf"/>
</dbReference>
<dbReference type="InterPro" id="IPR039371">
    <property type="entry name" value="LeuA_N_DRE-TIM"/>
</dbReference>
<dbReference type="InterPro" id="IPR000891">
    <property type="entry name" value="PYR_CT"/>
</dbReference>
<dbReference type="NCBIfam" id="TIGR00970">
    <property type="entry name" value="leuA_yeast"/>
    <property type="match status" value="1"/>
</dbReference>
<dbReference type="NCBIfam" id="NF002991">
    <property type="entry name" value="PRK03739.1"/>
    <property type="match status" value="1"/>
</dbReference>
<dbReference type="PANTHER" id="PTHR46911">
    <property type="match status" value="1"/>
</dbReference>
<dbReference type="PANTHER" id="PTHR46911:SF1">
    <property type="entry name" value="2-ISOPROPYLMALATE SYNTHASE"/>
    <property type="match status" value="1"/>
</dbReference>
<dbReference type="Pfam" id="PF00682">
    <property type="entry name" value="HMGL-like"/>
    <property type="match status" value="1"/>
</dbReference>
<dbReference type="Pfam" id="PF22615">
    <property type="entry name" value="IPMS_D2"/>
    <property type="match status" value="1"/>
</dbReference>
<dbReference type="Pfam" id="PF08502">
    <property type="entry name" value="LeuA_dimer"/>
    <property type="match status" value="1"/>
</dbReference>
<dbReference type="SMART" id="SM00917">
    <property type="entry name" value="LeuA_dimer"/>
    <property type="match status" value="1"/>
</dbReference>
<dbReference type="SUPFAM" id="SSF110921">
    <property type="entry name" value="2-isopropylmalate synthase LeuA, allosteric (dimerisation) domain"/>
    <property type="match status" value="1"/>
</dbReference>
<dbReference type="SUPFAM" id="SSF51569">
    <property type="entry name" value="Aldolase"/>
    <property type="match status" value="1"/>
</dbReference>
<dbReference type="SUPFAM" id="SSF89000">
    <property type="entry name" value="post-HMGL domain-like"/>
    <property type="match status" value="1"/>
</dbReference>
<dbReference type="PROSITE" id="PS00815">
    <property type="entry name" value="AIPM_HOMOCIT_SYNTH_1"/>
    <property type="match status" value="1"/>
</dbReference>
<dbReference type="PROSITE" id="PS00816">
    <property type="entry name" value="AIPM_HOMOCIT_SYNTH_2"/>
    <property type="match status" value="1"/>
</dbReference>
<dbReference type="PROSITE" id="PS50991">
    <property type="entry name" value="PYR_CT"/>
    <property type="match status" value="1"/>
</dbReference>
<protein>
    <recommendedName>
        <fullName evidence="1">2-isopropylmalate synthase</fullName>
        <ecNumber evidence="1">2.3.3.13</ecNumber>
    </recommendedName>
    <alternativeName>
        <fullName evidence="1">Alpha-IPM synthase</fullName>
    </alternativeName>
    <alternativeName>
        <fullName evidence="1">Alpha-isopropylmalate synthase</fullName>
    </alternativeName>
</protein>
<accession>A8L551</accession>
<name>LEU1_PARS2</name>
<proteinExistence type="inferred from homology"/>
<gene>
    <name evidence="1" type="primary">leuA</name>
    <name type="ordered locus">Franean1_1095</name>
</gene>
<keyword id="KW-0028">Amino-acid biosynthesis</keyword>
<keyword id="KW-0100">Branched-chain amino acid biosynthesis</keyword>
<keyword id="KW-0963">Cytoplasm</keyword>
<keyword id="KW-0432">Leucine biosynthesis</keyword>
<keyword id="KW-0460">Magnesium</keyword>
<keyword id="KW-0479">Metal-binding</keyword>
<keyword id="KW-0808">Transferase</keyword>
<feature type="chain" id="PRO_1000129505" description="2-isopropylmalate synthase">
    <location>
        <begin position="1"/>
        <end position="565"/>
    </location>
</feature>
<feature type="domain" description="Pyruvate carboxyltransferase" evidence="1">
    <location>
        <begin position="37"/>
        <end position="312"/>
    </location>
</feature>
<feature type="region of interest" description="Regulatory domain" evidence="1">
    <location>
        <begin position="446"/>
        <end position="565"/>
    </location>
</feature>
<feature type="binding site" evidence="1">
    <location>
        <position position="46"/>
    </location>
    <ligand>
        <name>Mg(2+)</name>
        <dbReference type="ChEBI" id="CHEBI:18420"/>
    </ligand>
</feature>
<feature type="binding site" evidence="1">
    <location>
        <position position="251"/>
    </location>
    <ligand>
        <name>Mg(2+)</name>
        <dbReference type="ChEBI" id="CHEBI:18420"/>
    </ligand>
</feature>
<feature type="binding site" evidence="1">
    <location>
        <position position="253"/>
    </location>
    <ligand>
        <name>Mg(2+)</name>
        <dbReference type="ChEBI" id="CHEBI:18420"/>
    </ligand>
</feature>
<feature type="binding site" evidence="1">
    <location>
        <position position="287"/>
    </location>
    <ligand>
        <name>Mg(2+)</name>
        <dbReference type="ChEBI" id="CHEBI:18420"/>
    </ligand>
</feature>
<evidence type="ECO:0000255" key="1">
    <source>
        <dbReference type="HAMAP-Rule" id="MF_00572"/>
    </source>
</evidence>